<name>SEC2_YEAST</name>
<reference key="1">
    <citation type="journal article" date="1990" name="J. Cell Biol.">
        <title>Sec2 protein contains a coiled-coil domain essential for vesicular transport and a dispensable carboxy terminal domain.</title>
        <authorList>
            <person name="Nair J."/>
            <person name="Mueller H."/>
            <person name="Peterson M."/>
            <person name="Novick P.J."/>
        </authorList>
    </citation>
    <scope>NUCLEOTIDE SEQUENCE [GENOMIC DNA]</scope>
    <source>
        <strain>S288c / GRF88</strain>
    </source>
</reference>
<reference key="2">
    <citation type="journal article" date="1997" name="Nature">
        <title>The nucleotide sequence of Saccharomyces cerevisiae chromosome XIV and its evolutionary implications.</title>
        <authorList>
            <person name="Philippsen P."/>
            <person name="Kleine K."/>
            <person name="Poehlmann R."/>
            <person name="Duesterhoeft A."/>
            <person name="Hamberg K."/>
            <person name="Hegemann J.H."/>
            <person name="Obermaier B."/>
            <person name="Urrestarazu L.A."/>
            <person name="Aert R."/>
            <person name="Albermann K."/>
            <person name="Altmann R."/>
            <person name="Andre B."/>
            <person name="Baladron V."/>
            <person name="Ballesta J.P.G."/>
            <person name="Becam A.-M."/>
            <person name="Beinhauer J.D."/>
            <person name="Boskovic J."/>
            <person name="Buitrago M.J."/>
            <person name="Bussereau F."/>
            <person name="Coster F."/>
            <person name="Crouzet M."/>
            <person name="D'Angelo M."/>
            <person name="Dal Pero F."/>
            <person name="De Antoni A."/>
            <person name="del Rey F."/>
            <person name="Doignon F."/>
            <person name="Domdey H."/>
            <person name="Dubois E."/>
            <person name="Fiedler T.A."/>
            <person name="Fleig U."/>
            <person name="Floeth M."/>
            <person name="Fritz C."/>
            <person name="Gaillardin C."/>
            <person name="Garcia-Cantalejo J.M."/>
            <person name="Glansdorff N."/>
            <person name="Goffeau A."/>
            <person name="Gueldener U."/>
            <person name="Herbert C.J."/>
            <person name="Heumann K."/>
            <person name="Heuss-Neitzel D."/>
            <person name="Hilbert H."/>
            <person name="Hinni K."/>
            <person name="Iraqui Houssaini I."/>
            <person name="Jacquet M."/>
            <person name="Jimenez A."/>
            <person name="Jonniaux J.-L."/>
            <person name="Karpfinger-Hartl L."/>
            <person name="Lanfranchi G."/>
            <person name="Lepingle A."/>
            <person name="Levesque H."/>
            <person name="Lyck R."/>
            <person name="Maftahi M."/>
            <person name="Mallet L."/>
            <person name="Maurer C.T.C."/>
            <person name="Messenguy F."/>
            <person name="Mewes H.-W."/>
            <person name="Moestl D."/>
            <person name="Nasr F."/>
            <person name="Nicaud J.-M."/>
            <person name="Niedenthal R.K."/>
            <person name="Pandolfo D."/>
            <person name="Pierard A."/>
            <person name="Piravandi E."/>
            <person name="Planta R.J."/>
            <person name="Pohl T.M."/>
            <person name="Purnelle B."/>
            <person name="Rebischung C."/>
            <person name="Remacha M.A."/>
            <person name="Revuelta J.L."/>
            <person name="Rinke M."/>
            <person name="Saiz J.E."/>
            <person name="Sartorello F."/>
            <person name="Scherens B."/>
            <person name="Sen-Gupta M."/>
            <person name="Soler-Mira A."/>
            <person name="Urbanus J.H.M."/>
            <person name="Valle G."/>
            <person name="Van Dyck L."/>
            <person name="Verhasselt P."/>
            <person name="Vierendeels F."/>
            <person name="Vissers S."/>
            <person name="Voet M."/>
            <person name="Volckaert G."/>
            <person name="Wach A."/>
            <person name="Wambutt R."/>
            <person name="Wedler H."/>
            <person name="Zollner A."/>
            <person name="Hani J."/>
        </authorList>
    </citation>
    <scope>NUCLEOTIDE SEQUENCE [LARGE SCALE GENOMIC DNA]</scope>
    <source>
        <strain>ATCC 204508 / S288c</strain>
    </source>
</reference>
<reference key="3">
    <citation type="journal article" date="2014" name="G3 (Bethesda)">
        <title>The reference genome sequence of Saccharomyces cerevisiae: Then and now.</title>
        <authorList>
            <person name="Engel S.R."/>
            <person name="Dietrich F.S."/>
            <person name="Fisk D.G."/>
            <person name="Binkley G."/>
            <person name="Balakrishnan R."/>
            <person name="Costanzo M.C."/>
            <person name="Dwight S.S."/>
            <person name="Hitz B.C."/>
            <person name="Karra K."/>
            <person name="Nash R.S."/>
            <person name="Weng S."/>
            <person name="Wong E.D."/>
            <person name="Lloyd P."/>
            <person name="Skrzypek M.S."/>
            <person name="Miyasato S.R."/>
            <person name="Simison M."/>
            <person name="Cherry J.M."/>
        </authorList>
    </citation>
    <scope>GENOME REANNOTATION</scope>
    <source>
        <strain>ATCC 204508 / S288c</strain>
    </source>
</reference>
<reference key="4">
    <citation type="journal article" date="1997" name="J. Cell Biol.">
        <title>Sec2p mediates nucleotide exchange on Sec4p and is involved in polarized delivery of post-Golgi vesicles.</title>
        <authorList>
            <person name="Walch-Solimena C."/>
            <person name="Collins R.N."/>
            <person name="Novick P.J."/>
        </authorList>
    </citation>
    <scope>FUNCTION</scope>
    <scope>INTERACTION WITH SEC4</scope>
</reference>
<reference key="5">
    <citation type="journal article" date="2000" name="J. Cell Biol.">
        <title>The role of the COOH terminus of Sec2p in the transport of post-Golgi vesicles.</title>
        <authorList>
            <person name="Elkind N.B."/>
            <person name="Walch-Solimena C."/>
            <person name="Novick P.J."/>
        </authorList>
    </citation>
    <scope>FUNCTION</scope>
    <scope>SUBCELLULAR LOCATION</scope>
    <scope>MUTAGENESIS OF CYS-483</scope>
    <scope>PHOSPHORYLATION</scope>
</reference>
<reference key="6">
    <citation type="journal article" date="2002" name="J. Cell Biol.">
        <title>Ypt32 recruits the Sec4p guanine nucleotide exchange factor, Sec2p, to secretory vesicles; evidence for a Rab cascade in yeast.</title>
        <authorList>
            <person name="Ortiz D."/>
            <person name="Medkova M."/>
            <person name="Walch-Solimena C."/>
            <person name="Novick P.J."/>
        </authorList>
    </citation>
    <scope>FUNCTION</scope>
    <scope>INTERACTION WITH YPT32</scope>
</reference>
<reference key="7">
    <citation type="journal article" date="2003" name="Nature">
        <title>Global analysis of protein expression in yeast.</title>
        <authorList>
            <person name="Ghaemmaghami S."/>
            <person name="Huh W.-K."/>
            <person name="Bower K."/>
            <person name="Howson R.W."/>
            <person name="Belle A."/>
            <person name="Dephoure N."/>
            <person name="O'Shea E.K."/>
            <person name="Weissman J.S."/>
        </authorList>
    </citation>
    <scope>LEVEL OF PROTEIN EXPRESSION [LARGE SCALE ANALYSIS]</scope>
</reference>
<reference key="8">
    <citation type="journal article" date="2007" name="J. Proteome Res.">
        <title>Large-scale phosphorylation analysis of alpha-factor-arrested Saccharomyces cerevisiae.</title>
        <authorList>
            <person name="Li X."/>
            <person name="Gerber S.A."/>
            <person name="Rudner A.D."/>
            <person name="Beausoleil S.A."/>
            <person name="Haas W."/>
            <person name="Villen J."/>
            <person name="Elias J.E."/>
            <person name="Gygi S.P."/>
        </authorList>
    </citation>
    <scope>PHOSPHORYLATION [LARGE SCALE ANALYSIS] AT SER-515</scope>
    <scope>IDENTIFICATION BY MASS SPECTROMETRY [LARGE SCALE ANALYSIS]</scope>
    <source>
        <strain>ADR376</strain>
    </source>
</reference>
<reference key="9">
    <citation type="journal article" date="2008" name="Mol. Cell. Proteomics">
        <title>A multidimensional chromatography technology for in-depth phosphoproteome analysis.</title>
        <authorList>
            <person name="Albuquerque C.P."/>
            <person name="Smolka M.B."/>
            <person name="Payne S.H."/>
            <person name="Bafna V."/>
            <person name="Eng J."/>
            <person name="Zhou H."/>
        </authorList>
    </citation>
    <scope>PHOSPHORYLATION [LARGE SCALE ANALYSIS] AT SER-515</scope>
    <scope>IDENTIFICATION BY MASS SPECTROMETRY [LARGE SCALE ANALYSIS]</scope>
</reference>
<reference key="10">
    <citation type="journal article" date="2009" name="Science">
        <title>Global analysis of Cdk1 substrate phosphorylation sites provides insights into evolution.</title>
        <authorList>
            <person name="Holt L.J."/>
            <person name="Tuch B.B."/>
            <person name="Villen J."/>
            <person name="Johnson A.D."/>
            <person name="Gygi S.P."/>
            <person name="Morgan D.O."/>
        </authorList>
    </citation>
    <scope>PHOSPHORYLATION [LARGE SCALE ANALYSIS] AT THR-168; SER-171 AND SER-515</scope>
    <scope>IDENTIFICATION BY MASS SPECTROMETRY [LARGE SCALE ANALYSIS]</scope>
</reference>
<reference key="11">
    <citation type="journal article" date="2012" name="Proc. Natl. Acad. Sci. U.S.A.">
        <title>N-terminal acetylome analyses and functional insights of the N-terminal acetyltransferase NatB.</title>
        <authorList>
            <person name="Van Damme P."/>
            <person name="Lasa M."/>
            <person name="Polevoda B."/>
            <person name="Gazquez C."/>
            <person name="Elosegui-Artola A."/>
            <person name="Kim D.S."/>
            <person name="De Juan-Pardo E."/>
            <person name="Demeyer K."/>
            <person name="Hole K."/>
            <person name="Larrea E."/>
            <person name="Timmerman E."/>
            <person name="Prieto J."/>
            <person name="Arnesen T."/>
            <person name="Sherman F."/>
            <person name="Gevaert K."/>
            <person name="Aldabe R."/>
        </authorList>
    </citation>
    <scope>ACETYLATION [LARGE SCALE ANALYSIS] AT MET-1</scope>
    <scope>IDENTIFICATION BY MASS SPECTROMETRY [LARGE SCALE ANALYSIS]</scope>
</reference>
<comment type="function">
    <text evidence="3 4 6">Guanine nucleotide exchange factor for SEC4, catalyzing the dissociation of GDP from SEC4 and also potently promoting binding of GTP. Activation of SEC4 by SEC2 is needed for the directed transport of vesicles to sites of exocytosis. Binds the Rab GTPase YPT32, but does not have exchange activity on YPT32.</text>
</comment>
<comment type="subunit">
    <text evidence="4 6">Interacts with SEC4. Interacts with YPT32, preferentially in its GTP-bound form.</text>
</comment>
<comment type="interaction">
    <interactant intactId="EBI-16842">
        <id>P17065</id>
    </interactant>
    <interactant intactId="EBI-16842">
        <id>P17065</id>
        <label>SEC2</label>
    </interactant>
    <organismsDiffer>false</organismsDiffer>
    <experiments>2</experiments>
</comment>
<comment type="interaction">
    <interactant intactId="EBI-16842">
        <id>P17065</id>
    </interactant>
    <interactant intactId="EBI-16858">
        <id>P07560</id>
        <label>SEC4</label>
    </interactant>
    <organismsDiffer>false</organismsDiffer>
    <experiments>4</experiments>
</comment>
<comment type="subcellular location">
    <subcellularLocation>
        <location evidence="3">Bud neck</location>
    </subcellularLocation>
    <subcellularLocation>
        <location evidence="3">Bud tip</location>
    </subcellularLocation>
    <subcellularLocation>
        <location evidence="3">Cytoplasmic vesicle</location>
        <location evidence="3">Secretory vesicle</location>
    </subcellularLocation>
    <text>Localizes to sites of polarized growth, namely to the bud neck and to the bud tip of growing buds, and associates with membranes. Colocalizes with secretory vesicles at exocytic sites. Proper localization is dependent on the actin cytoskeleton, MYO2, the kinesin-related protein SMY1, the Rab GTPase YPT32, and the production of post-Golgi vesicles.</text>
</comment>
<comment type="domain">
    <text>The N-terminal domain (1-374) is sufficient for the exchange factor activity.</text>
</comment>
<comment type="miscellaneous">
    <text evidence="5">Present with 13200 molecules/cell in log phase SD medium.</text>
</comment>
<comment type="similarity">
    <text evidence="7">Belongs to the SEC2 family.</text>
</comment>
<gene>
    <name type="primary">SEC2</name>
    <name type="ordered locus">YNL272C</name>
    <name type="ORF">N0641</name>
</gene>
<sequence>MDASEEAKRVSIQVTSLSTQLIESVDKQSHLEEQLNKSLKTIASQKAAIENYNQLKEDYNTLKRELSDRDDEVKRLREDIAKENELRTKAEEEADKLNKEVEDLTASLFDEANNMVADARKEKYAIEILNKRLTEQLREKDTLLDTLTLQLKNLKKVMHSLDNESTVTNNSNRYSTILSDSATSSSTSLNKVPTSYSLASQDIYSGIVYSPSISSIRYDISLYNEFLKFVAALPRCENIKATSTESKLIRRLVNDEIQPILKIDNASGIGWLVKKTLLSLIIDGLVVVEPLSGVNATYQIGYNSSSPAKQATSNMPKMFKFPLDSPPVAVHAACSFCGESRDDIIEHARMYILKTLHKTDDGKEQVTNTYPLCHWCLLKLRQTCEIFAFLRSLKVGAWHLEKLTTQNITKEDLEKFSEVTKHTKRDGRVSSQDKKTKRLSFMAGLGINSSTKNKPKMEIFSSETNAKPGQPTTNIQRAWLQLCKLRCILHWTHIGIWAVDDSISSKIGPLVEDDSDEDQNDAISVRLQDKALWKQDAKRPFSSSSAEESQKSDAFDFESGDMENEITGESSSDESSSDGSSTDNSTADSSSEDESSLADSTTSSADSSSPESIDNGEGDDTVTKDDKSSIKSANNNEENSDCGDKKGRSIIKKKAPQRKIQKKKLLQDLDDLEEQFREESAIDQTEFENAESNVKQNISSKRASSGDENSKKDNNEKTLKTNLTIGDKTQEQIGENSPSSGLHASSSNDDNFDDAQEQQ</sequence>
<organism>
    <name type="scientific">Saccharomyces cerevisiae (strain ATCC 204508 / S288c)</name>
    <name type="common">Baker's yeast</name>
    <dbReference type="NCBI Taxonomy" id="559292"/>
    <lineage>
        <taxon>Eukaryota</taxon>
        <taxon>Fungi</taxon>
        <taxon>Dikarya</taxon>
        <taxon>Ascomycota</taxon>
        <taxon>Saccharomycotina</taxon>
        <taxon>Saccharomycetes</taxon>
        <taxon>Saccharomycetales</taxon>
        <taxon>Saccharomycetaceae</taxon>
        <taxon>Saccharomyces</taxon>
    </lineage>
</organism>
<protein>
    <recommendedName>
        <fullName>Rab guanine nucleotide exchange factor SEC2</fullName>
    </recommendedName>
    <alternativeName>
        <fullName>GDP-GTP exchange factor SEC2</fullName>
    </alternativeName>
</protein>
<dbReference type="EMBL" id="X52147">
    <property type="protein sequence ID" value="CAA36395.1"/>
    <property type="molecule type" value="Genomic_DNA"/>
</dbReference>
<dbReference type="EMBL" id="Z71548">
    <property type="protein sequence ID" value="CAA96180.1"/>
    <property type="molecule type" value="Genomic_DNA"/>
</dbReference>
<dbReference type="EMBL" id="BK006947">
    <property type="protein sequence ID" value="DAA10288.1"/>
    <property type="molecule type" value="Genomic_DNA"/>
</dbReference>
<dbReference type="PIR" id="A35597">
    <property type="entry name" value="A35597"/>
</dbReference>
<dbReference type="RefSeq" id="NP_014127.1">
    <property type="nucleotide sequence ID" value="NM_001183110.1"/>
</dbReference>
<dbReference type="PDB" id="2E7S">
    <property type="method" value="X-ray"/>
    <property type="resolution" value="3.00 A"/>
    <property type="chains" value="A/B/C/D/E/F/G/H/I/J/K/L/M/N/O/P/Q/R/S/T=31-160"/>
</dbReference>
<dbReference type="PDB" id="2EQB">
    <property type="method" value="X-ray"/>
    <property type="resolution" value="2.70 A"/>
    <property type="chains" value="B/C=51-142"/>
</dbReference>
<dbReference type="PDB" id="2OCY">
    <property type="method" value="X-ray"/>
    <property type="resolution" value="3.30 A"/>
    <property type="chains" value="A/B=17-167"/>
</dbReference>
<dbReference type="PDB" id="4ZDW">
    <property type="method" value="X-ray"/>
    <property type="resolution" value="2.90 A"/>
    <property type="chains" value="B/C=51-142"/>
</dbReference>
<dbReference type="PDBsum" id="2E7S"/>
<dbReference type="PDBsum" id="2EQB"/>
<dbReference type="PDBsum" id="2OCY"/>
<dbReference type="PDBsum" id="4ZDW"/>
<dbReference type="SMR" id="P17065"/>
<dbReference type="BioGRID" id="35568">
    <property type="interactions" value="388"/>
</dbReference>
<dbReference type="DIP" id="DIP-2493N"/>
<dbReference type="FunCoup" id="P17065">
    <property type="interactions" value="248"/>
</dbReference>
<dbReference type="IntAct" id="P17065">
    <property type="interactions" value="30"/>
</dbReference>
<dbReference type="MINT" id="P17065"/>
<dbReference type="STRING" id="4932.YNL272C"/>
<dbReference type="iPTMnet" id="P17065"/>
<dbReference type="PaxDb" id="4932-YNL272C"/>
<dbReference type="PeptideAtlas" id="P17065"/>
<dbReference type="EnsemblFungi" id="YNL272C_mRNA">
    <property type="protein sequence ID" value="YNL272C"/>
    <property type="gene ID" value="YNL272C"/>
</dbReference>
<dbReference type="GeneID" id="855449"/>
<dbReference type="KEGG" id="sce:YNL272C"/>
<dbReference type="AGR" id="SGD:S000005216"/>
<dbReference type="SGD" id="S000005216">
    <property type="gene designation" value="SEC2"/>
</dbReference>
<dbReference type="VEuPathDB" id="FungiDB:YNL272C"/>
<dbReference type="eggNOG" id="KOG4324">
    <property type="taxonomic scope" value="Eukaryota"/>
</dbReference>
<dbReference type="GeneTree" id="ENSGT00940000175137"/>
<dbReference type="HOGENOM" id="CLU_018015_0_0_1"/>
<dbReference type="InParanoid" id="P17065"/>
<dbReference type="OMA" id="WSKLGFW"/>
<dbReference type="OrthoDB" id="1748564at2759"/>
<dbReference type="BioCyc" id="YEAST:G3O-33266-MONOMER"/>
<dbReference type="Reactome" id="R-SCE-5620912">
    <property type="pathway name" value="Anchoring of the basal body to the plasma membrane"/>
</dbReference>
<dbReference type="Reactome" id="R-SCE-8876198">
    <property type="pathway name" value="RAB GEFs exchange GTP for GDP on RABs"/>
</dbReference>
<dbReference type="BioGRID-ORCS" id="855449">
    <property type="hits" value="1 hit in 10 CRISPR screens"/>
</dbReference>
<dbReference type="EvolutionaryTrace" id="P17065"/>
<dbReference type="PRO" id="PR:P17065"/>
<dbReference type="Proteomes" id="UP000002311">
    <property type="component" value="Chromosome XIV"/>
</dbReference>
<dbReference type="RNAct" id="P17065">
    <property type="molecule type" value="protein"/>
</dbReference>
<dbReference type="GO" id="GO:0051286">
    <property type="term" value="C:cell tip"/>
    <property type="evidence" value="ECO:0000318"/>
    <property type="project" value="GO_Central"/>
</dbReference>
<dbReference type="GO" id="GO:0005935">
    <property type="term" value="C:cellular bud neck"/>
    <property type="evidence" value="ECO:0000314"/>
    <property type="project" value="SGD"/>
</dbReference>
<dbReference type="GO" id="GO:0005934">
    <property type="term" value="C:cellular bud tip"/>
    <property type="evidence" value="ECO:0000314"/>
    <property type="project" value="SGD"/>
</dbReference>
<dbReference type="GO" id="GO:0005829">
    <property type="term" value="C:cytosol"/>
    <property type="evidence" value="ECO:0000314"/>
    <property type="project" value="SGD"/>
</dbReference>
<dbReference type="GO" id="GO:0043332">
    <property type="term" value="C:mating projection tip"/>
    <property type="evidence" value="ECO:0007005"/>
    <property type="project" value="SGD"/>
</dbReference>
<dbReference type="GO" id="GO:0030133">
    <property type="term" value="C:transport vesicle"/>
    <property type="evidence" value="ECO:0000314"/>
    <property type="project" value="SGD"/>
</dbReference>
<dbReference type="GO" id="GO:0005085">
    <property type="term" value="F:guanyl-nucleotide exchange factor activity"/>
    <property type="evidence" value="ECO:0000314"/>
    <property type="project" value="SGD"/>
</dbReference>
<dbReference type="GO" id="GO:0042802">
    <property type="term" value="F:identical protein binding"/>
    <property type="evidence" value="ECO:0000353"/>
    <property type="project" value="IntAct"/>
</dbReference>
<dbReference type="GO" id="GO:0070273">
    <property type="term" value="F:phosphatidylinositol-4-phosphate binding"/>
    <property type="evidence" value="ECO:0000314"/>
    <property type="project" value="SGD"/>
</dbReference>
<dbReference type="GO" id="GO:0032120">
    <property type="term" value="P:ascospore-type prospore membrane formation"/>
    <property type="evidence" value="ECO:0000315"/>
    <property type="project" value="SGD"/>
</dbReference>
<dbReference type="GO" id="GO:0006914">
    <property type="term" value="P:autophagy"/>
    <property type="evidence" value="ECO:0000315"/>
    <property type="project" value="SGD"/>
</dbReference>
<dbReference type="GO" id="GO:0006887">
    <property type="term" value="P:exocytosis"/>
    <property type="evidence" value="ECO:0000315"/>
    <property type="project" value="SGD"/>
</dbReference>
<dbReference type="GO" id="GO:0015031">
    <property type="term" value="P:protein transport"/>
    <property type="evidence" value="ECO:0007669"/>
    <property type="project" value="UniProtKB-KW"/>
</dbReference>
<dbReference type="GO" id="GO:0030435">
    <property type="term" value="P:sporulation resulting in formation of a cellular spore"/>
    <property type="evidence" value="ECO:0000315"/>
    <property type="project" value="SGD"/>
</dbReference>
<dbReference type="CDD" id="cd21044">
    <property type="entry name" value="Rab11BD_RAB3IP_like"/>
    <property type="match status" value="1"/>
</dbReference>
<dbReference type="Gene3D" id="6.10.140.910">
    <property type="match status" value="1"/>
</dbReference>
<dbReference type="InterPro" id="IPR040351">
    <property type="entry name" value="RAB3IL/RAB3IP/Sec2"/>
</dbReference>
<dbReference type="InterPro" id="IPR009449">
    <property type="entry name" value="Sec2_N"/>
</dbReference>
<dbReference type="PANTHER" id="PTHR14430">
    <property type="entry name" value="RABIN3-RELATED"/>
    <property type="match status" value="1"/>
</dbReference>
<dbReference type="PANTHER" id="PTHR14430:SF0">
    <property type="entry name" value="SEC2P DOMAIN-CONTAINING PROTEIN"/>
    <property type="match status" value="1"/>
</dbReference>
<dbReference type="Pfam" id="PF06428">
    <property type="entry name" value="Sec2p"/>
    <property type="match status" value="1"/>
</dbReference>
<dbReference type="SUPFAM" id="SSF144284">
    <property type="entry name" value="Sec2 N-terminal region"/>
    <property type="match status" value="1"/>
</dbReference>
<proteinExistence type="evidence at protein level"/>
<evidence type="ECO:0000255" key="1"/>
<evidence type="ECO:0000256" key="2">
    <source>
        <dbReference type="SAM" id="MobiDB-lite"/>
    </source>
</evidence>
<evidence type="ECO:0000269" key="3">
    <source>
    </source>
</evidence>
<evidence type="ECO:0000269" key="4">
    <source>
    </source>
</evidence>
<evidence type="ECO:0000269" key="5">
    <source>
    </source>
</evidence>
<evidence type="ECO:0000269" key="6">
    <source>
    </source>
</evidence>
<evidence type="ECO:0000305" key="7"/>
<evidence type="ECO:0007744" key="8">
    <source>
    </source>
</evidence>
<evidence type="ECO:0007744" key="9">
    <source>
    </source>
</evidence>
<evidence type="ECO:0007744" key="10">
    <source>
    </source>
</evidence>
<evidence type="ECO:0007744" key="11">
    <source>
    </source>
</evidence>
<evidence type="ECO:0007829" key="12">
    <source>
        <dbReference type="PDB" id="2E7S"/>
    </source>
</evidence>
<evidence type="ECO:0007829" key="13">
    <source>
        <dbReference type="PDB" id="2EQB"/>
    </source>
</evidence>
<feature type="chain" id="PRO_0000097661" description="Rab guanine nucleotide exchange factor SEC2">
    <location>
        <begin position="1"/>
        <end position="759"/>
    </location>
</feature>
<feature type="region of interest" description="Required for proper polarized localization of the protein">
    <location>
        <begin position="451"/>
        <end position="508"/>
    </location>
</feature>
<feature type="region of interest" description="Disordered" evidence="2">
    <location>
        <begin position="538"/>
        <end position="759"/>
    </location>
</feature>
<feature type="coiled-coil region" evidence="1">
    <location>
        <begin position="26"/>
        <end position="164"/>
    </location>
</feature>
<feature type="coiled-coil region" evidence="1">
    <location>
        <begin position="651"/>
        <end position="682"/>
    </location>
</feature>
<feature type="coiled-coil region" evidence="1">
    <location>
        <begin position="732"/>
        <end position="759"/>
    </location>
</feature>
<feature type="compositionally biased region" description="Acidic residues" evidence="2">
    <location>
        <begin position="555"/>
        <end position="576"/>
    </location>
</feature>
<feature type="compositionally biased region" description="Low complexity" evidence="2">
    <location>
        <begin position="577"/>
        <end position="589"/>
    </location>
</feature>
<feature type="compositionally biased region" description="Low complexity" evidence="2">
    <location>
        <begin position="597"/>
        <end position="612"/>
    </location>
</feature>
<feature type="compositionally biased region" description="Basic residues" evidence="2">
    <location>
        <begin position="648"/>
        <end position="664"/>
    </location>
</feature>
<feature type="compositionally biased region" description="Polar residues" evidence="2">
    <location>
        <begin position="690"/>
        <end position="703"/>
    </location>
</feature>
<feature type="compositionally biased region" description="Basic and acidic residues" evidence="2">
    <location>
        <begin position="704"/>
        <end position="719"/>
    </location>
</feature>
<feature type="compositionally biased region" description="Polar residues" evidence="2">
    <location>
        <begin position="731"/>
        <end position="744"/>
    </location>
</feature>
<feature type="compositionally biased region" description="Acidic residues" evidence="2">
    <location>
        <begin position="750"/>
        <end position="759"/>
    </location>
</feature>
<feature type="modified residue" description="N-acetylmethionine" evidence="11">
    <location>
        <position position="1"/>
    </location>
</feature>
<feature type="modified residue" description="Phosphothreonine" evidence="10">
    <location>
        <position position="168"/>
    </location>
</feature>
<feature type="modified residue" description="Phosphoserine" evidence="10">
    <location>
        <position position="171"/>
    </location>
</feature>
<feature type="modified residue" description="Phosphoserine" evidence="8 9 10">
    <location>
        <position position="515"/>
    </location>
</feature>
<feature type="mutagenesis site" description="In SEC2-78; temperature-sensitive; causes mislocalization of the protein, displaying many cytoplasmic punctae." evidence="3">
    <original>C</original>
    <variation>Y</variation>
    <location>
        <position position="483"/>
    </location>
</feature>
<feature type="turn" evidence="12">
    <location>
        <begin position="34"/>
        <end position="36"/>
    </location>
</feature>
<feature type="helix" evidence="13">
    <location>
        <begin position="52"/>
        <end position="141"/>
    </location>
</feature>
<feature type="turn" evidence="12">
    <location>
        <begin position="147"/>
        <end position="149"/>
    </location>
</feature>
<accession>P17065</accession>
<accession>D6W0S2</accession>
<keyword id="KW-0002">3D-structure</keyword>
<keyword id="KW-0007">Acetylation</keyword>
<keyword id="KW-0175">Coiled coil</keyword>
<keyword id="KW-0968">Cytoplasmic vesicle</keyword>
<keyword id="KW-0344">Guanine-nucleotide releasing factor</keyword>
<keyword id="KW-0597">Phosphoprotein</keyword>
<keyword id="KW-0653">Protein transport</keyword>
<keyword id="KW-1185">Reference proteome</keyword>
<keyword id="KW-0813">Transport</keyword>